<protein>
    <recommendedName>
        <fullName evidence="1">Protein-L-isoaspartate O-methyltransferase</fullName>
        <ecNumber evidence="1">2.1.1.77</ecNumber>
    </recommendedName>
    <alternativeName>
        <fullName evidence="1">L-isoaspartyl protein carboxyl methyltransferase</fullName>
    </alternativeName>
    <alternativeName>
        <fullName evidence="1">Protein L-isoaspartyl methyltransferase</fullName>
    </alternativeName>
    <alternativeName>
        <fullName evidence="1">Protein-beta-aspartate methyltransferase</fullName>
        <shortName evidence="1">PIMT</shortName>
    </alternativeName>
</protein>
<dbReference type="EC" id="2.1.1.77" evidence="1"/>
<dbReference type="EMBL" id="CU928163">
    <property type="protein sequence ID" value="CAR14234.1"/>
    <property type="molecule type" value="Genomic_DNA"/>
</dbReference>
<dbReference type="RefSeq" id="WP_000254708.1">
    <property type="nucleotide sequence ID" value="NC_011751.1"/>
</dbReference>
<dbReference type="RefSeq" id="YP_002413756.1">
    <property type="nucleotide sequence ID" value="NC_011751.1"/>
</dbReference>
<dbReference type="SMR" id="B7N6X3"/>
<dbReference type="STRING" id="585056.ECUMN_3067"/>
<dbReference type="GeneID" id="93779263"/>
<dbReference type="KEGG" id="eum:ECUMN_3067"/>
<dbReference type="PATRIC" id="fig|585056.7.peg.3243"/>
<dbReference type="HOGENOM" id="CLU_055432_2_0_6"/>
<dbReference type="Proteomes" id="UP000007097">
    <property type="component" value="Chromosome"/>
</dbReference>
<dbReference type="GO" id="GO:0005737">
    <property type="term" value="C:cytoplasm"/>
    <property type="evidence" value="ECO:0007669"/>
    <property type="project" value="UniProtKB-SubCell"/>
</dbReference>
<dbReference type="GO" id="GO:0004719">
    <property type="term" value="F:protein-L-isoaspartate (D-aspartate) O-methyltransferase activity"/>
    <property type="evidence" value="ECO:0007669"/>
    <property type="project" value="UniProtKB-UniRule"/>
</dbReference>
<dbReference type="GO" id="GO:0032259">
    <property type="term" value="P:methylation"/>
    <property type="evidence" value="ECO:0007669"/>
    <property type="project" value="UniProtKB-KW"/>
</dbReference>
<dbReference type="GO" id="GO:0036211">
    <property type="term" value="P:protein modification process"/>
    <property type="evidence" value="ECO:0007669"/>
    <property type="project" value="UniProtKB-UniRule"/>
</dbReference>
<dbReference type="GO" id="GO:0030091">
    <property type="term" value="P:protein repair"/>
    <property type="evidence" value="ECO:0007669"/>
    <property type="project" value="UniProtKB-UniRule"/>
</dbReference>
<dbReference type="CDD" id="cd02440">
    <property type="entry name" value="AdoMet_MTases"/>
    <property type="match status" value="1"/>
</dbReference>
<dbReference type="FunFam" id="3.40.50.150:FF:000010">
    <property type="entry name" value="Protein-L-isoaspartate O-methyltransferase"/>
    <property type="match status" value="1"/>
</dbReference>
<dbReference type="Gene3D" id="3.40.50.150">
    <property type="entry name" value="Vaccinia Virus protein VP39"/>
    <property type="match status" value="1"/>
</dbReference>
<dbReference type="HAMAP" id="MF_00090">
    <property type="entry name" value="PIMT"/>
    <property type="match status" value="1"/>
</dbReference>
<dbReference type="InterPro" id="IPR000682">
    <property type="entry name" value="PCMT"/>
</dbReference>
<dbReference type="InterPro" id="IPR029063">
    <property type="entry name" value="SAM-dependent_MTases_sf"/>
</dbReference>
<dbReference type="NCBIfam" id="TIGR00080">
    <property type="entry name" value="pimt"/>
    <property type="match status" value="1"/>
</dbReference>
<dbReference type="NCBIfam" id="NF001453">
    <property type="entry name" value="PRK00312.1"/>
    <property type="match status" value="1"/>
</dbReference>
<dbReference type="PANTHER" id="PTHR11579">
    <property type="entry name" value="PROTEIN-L-ISOASPARTATE O-METHYLTRANSFERASE"/>
    <property type="match status" value="1"/>
</dbReference>
<dbReference type="PANTHER" id="PTHR11579:SF0">
    <property type="entry name" value="PROTEIN-L-ISOASPARTATE(D-ASPARTATE) O-METHYLTRANSFERASE"/>
    <property type="match status" value="1"/>
</dbReference>
<dbReference type="Pfam" id="PF01135">
    <property type="entry name" value="PCMT"/>
    <property type="match status" value="1"/>
</dbReference>
<dbReference type="SUPFAM" id="SSF53335">
    <property type="entry name" value="S-adenosyl-L-methionine-dependent methyltransferases"/>
    <property type="match status" value="1"/>
</dbReference>
<dbReference type="PROSITE" id="PS01279">
    <property type="entry name" value="PCMT"/>
    <property type="match status" value="1"/>
</dbReference>
<proteinExistence type="inferred from homology"/>
<name>PIMT_ECOLU</name>
<sequence>MVSRRVQALLDQLRAQGIQDEQVLNALAAVPREKFVDEAFEQKAWDNIALPIGQGQTISQPYMVARMTELLELTPQSRVLEIGTGSGYQTAILAHLVQHVCSVERIKGLQWQARRRLKNLDLHNVSTRHGDGWQGWQARAPFDAIIVTAAPPEIPTALMTQLDEGGILVLPVGEEHQYLKRVRRRGGEFIIDTVEAVRFVPLVKGELA</sequence>
<keyword id="KW-0963">Cytoplasm</keyword>
<keyword id="KW-0489">Methyltransferase</keyword>
<keyword id="KW-0949">S-adenosyl-L-methionine</keyword>
<keyword id="KW-0808">Transferase</keyword>
<gene>
    <name evidence="1" type="primary">pcm</name>
    <name type="ordered locus">ECUMN_3067</name>
</gene>
<comment type="function">
    <text evidence="1">Catalyzes the methyl esterification of L-isoaspartyl residues in peptides and proteins that result from spontaneous decomposition of normal L-aspartyl and L-asparaginyl residues. It plays a role in the repair and/or degradation of damaged proteins.</text>
</comment>
<comment type="catalytic activity">
    <reaction evidence="1">
        <text>[protein]-L-isoaspartate + S-adenosyl-L-methionine = [protein]-L-isoaspartate alpha-methyl ester + S-adenosyl-L-homocysteine</text>
        <dbReference type="Rhea" id="RHEA:12705"/>
        <dbReference type="Rhea" id="RHEA-COMP:12143"/>
        <dbReference type="Rhea" id="RHEA-COMP:12144"/>
        <dbReference type="ChEBI" id="CHEBI:57856"/>
        <dbReference type="ChEBI" id="CHEBI:59789"/>
        <dbReference type="ChEBI" id="CHEBI:90596"/>
        <dbReference type="ChEBI" id="CHEBI:90598"/>
        <dbReference type="EC" id="2.1.1.77"/>
    </reaction>
</comment>
<comment type="subcellular location">
    <subcellularLocation>
        <location evidence="1">Cytoplasm</location>
    </subcellularLocation>
</comment>
<comment type="similarity">
    <text evidence="1">Belongs to the methyltransferase superfamily. L-isoaspartyl/D-aspartyl protein methyltransferase family.</text>
</comment>
<feature type="chain" id="PRO_1000192392" description="Protein-L-isoaspartate O-methyltransferase">
    <location>
        <begin position="1"/>
        <end position="208"/>
    </location>
</feature>
<feature type="active site" evidence="1">
    <location>
        <position position="59"/>
    </location>
</feature>
<accession>B7N6X3</accession>
<reference key="1">
    <citation type="journal article" date="2009" name="PLoS Genet.">
        <title>Organised genome dynamics in the Escherichia coli species results in highly diverse adaptive paths.</title>
        <authorList>
            <person name="Touchon M."/>
            <person name="Hoede C."/>
            <person name="Tenaillon O."/>
            <person name="Barbe V."/>
            <person name="Baeriswyl S."/>
            <person name="Bidet P."/>
            <person name="Bingen E."/>
            <person name="Bonacorsi S."/>
            <person name="Bouchier C."/>
            <person name="Bouvet O."/>
            <person name="Calteau A."/>
            <person name="Chiapello H."/>
            <person name="Clermont O."/>
            <person name="Cruveiller S."/>
            <person name="Danchin A."/>
            <person name="Diard M."/>
            <person name="Dossat C."/>
            <person name="Karoui M.E."/>
            <person name="Frapy E."/>
            <person name="Garry L."/>
            <person name="Ghigo J.M."/>
            <person name="Gilles A.M."/>
            <person name="Johnson J."/>
            <person name="Le Bouguenec C."/>
            <person name="Lescat M."/>
            <person name="Mangenot S."/>
            <person name="Martinez-Jehanne V."/>
            <person name="Matic I."/>
            <person name="Nassif X."/>
            <person name="Oztas S."/>
            <person name="Petit M.A."/>
            <person name="Pichon C."/>
            <person name="Rouy Z."/>
            <person name="Ruf C.S."/>
            <person name="Schneider D."/>
            <person name="Tourret J."/>
            <person name="Vacherie B."/>
            <person name="Vallenet D."/>
            <person name="Medigue C."/>
            <person name="Rocha E.P.C."/>
            <person name="Denamur E."/>
        </authorList>
    </citation>
    <scope>NUCLEOTIDE SEQUENCE [LARGE SCALE GENOMIC DNA]</scope>
    <source>
        <strain>UMN026 / ExPEC</strain>
    </source>
</reference>
<evidence type="ECO:0000255" key="1">
    <source>
        <dbReference type="HAMAP-Rule" id="MF_00090"/>
    </source>
</evidence>
<organism>
    <name type="scientific">Escherichia coli O17:K52:H18 (strain UMN026 / ExPEC)</name>
    <dbReference type="NCBI Taxonomy" id="585056"/>
    <lineage>
        <taxon>Bacteria</taxon>
        <taxon>Pseudomonadati</taxon>
        <taxon>Pseudomonadota</taxon>
        <taxon>Gammaproteobacteria</taxon>
        <taxon>Enterobacterales</taxon>
        <taxon>Enterobacteriaceae</taxon>
        <taxon>Escherichia</taxon>
    </lineage>
</organism>